<evidence type="ECO:0000255" key="1">
    <source>
        <dbReference type="HAMAP-Rule" id="MF_01398"/>
    </source>
</evidence>
<accession>Q1LHK6</accession>
<keyword id="KW-0066">ATP synthesis</keyword>
<keyword id="KW-0997">Cell inner membrane</keyword>
<keyword id="KW-1003">Cell membrane</keyword>
<keyword id="KW-0138">CF(0)</keyword>
<keyword id="KW-0375">Hydrogen ion transport</keyword>
<keyword id="KW-0406">Ion transport</keyword>
<keyword id="KW-0472">Membrane</keyword>
<keyword id="KW-1185">Reference proteome</keyword>
<keyword id="KW-0812">Transmembrane</keyword>
<keyword id="KW-1133">Transmembrane helix</keyword>
<keyword id="KW-0813">Transport</keyword>
<gene>
    <name evidence="1" type="primary">atpF</name>
    <name type="ordered locus">Rmet_3498</name>
</gene>
<sequence length="156" mass="17273">MNLNATFFAQMVVFFILWWVVAKFIWPPLVKALDERAKKIADGLAAAEKGKAELELANKRVDQAMAEARTEGAQRVADAEKRAQLTADEIKQNAQAEAARIIAQAKAEAEQQVTRARESLRDQVAVLAVKGAEQILKREVNAQVHADLLNQLKAEL</sequence>
<dbReference type="EMBL" id="CP000352">
    <property type="protein sequence ID" value="ABF10370.1"/>
    <property type="molecule type" value="Genomic_DNA"/>
</dbReference>
<dbReference type="RefSeq" id="WP_008650161.1">
    <property type="nucleotide sequence ID" value="NC_007973.1"/>
</dbReference>
<dbReference type="SMR" id="Q1LHK6"/>
<dbReference type="STRING" id="266264.Rmet_3498"/>
<dbReference type="KEGG" id="rme:Rmet_3498"/>
<dbReference type="eggNOG" id="COG0711">
    <property type="taxonomic scope" value="Bacteria"/>
</dbReference>
<dbReference type="HOGENOM" id="CLU_079215_4_5_4"/>
<dbReference type="Proteomes" id="UP000002429">
    <property type="component" value="Chromosome"/>
</dbReference>
<dbReference type="GO" id="GO:0005886">
    <property type="term" value="C:plasma membrane"/>
    <property type="evidence" value="ECO:0007669"/>
    <property type="project" value="UniProtKB-SubCell"/>
</dbReference>
<dbReference type="GO" id="GO:0045259">
    <property type="term" value="C:proton-transporting ATP synthase complex"/>
    <property type="evidence" value="ECO:0007669"/>
    <property type="project" value="UniProtKB-KW"/>
</dbReference>
<dbReference type="GO" id="GO:0046933">
    <property type="term" value="F:proton-transporting ATP synthase activity, rotational mechanism"/>
    <property type="evidence" value="ECO:0007669"/>
    <property type="project" value="UniProtKB-UniRule"/>
</dbReference>
<dbReference type="GO" id="GO:0046961">
    <property type="term" value="F:proton-transporting ATPase activity, rotational mechanism"/>
    <property type="evidence" value="ECO:0007669"/>
    <property type="project" value="TreeGrafter"/>
</dbReference>
<dbReference type="CDD" id="cd06503">
    <property type="entry name" value="ATP-synt_Fo_b"/>
    <property type="match status" value="1"/>
</dbReference>
<dbReference type="Gene3D" id="6.10.250.1580">
    <property type="match status" value="1"/>
</dbReference>
<dbReference type="HAMAP" id="MF_01398">
    <property type="entry name" value="ATP_synth_b_bprime"/>
    <property type="match status" value="1"/>
</dbReference>
<dbReference type="InterPro" id="IPR028987">
    <property type="entry name" value="ATP_synth_B-like_membr_sf"/>
</dbReference>
<dbReference type="InterPro" id="IPR002146">
    <property type="entry name" value="ATP_synth_b/b'su_bac/chlpt"/>
</dbReference>
<dbReference type="InterPro" id="IPR005864">
    <property type="entry name" value="ATP_synth_F0_bsu_bac"/>
</dbReference>
<dbReference type="InterPro" id="IPR050059">
    <property type="entry name" value="ATP_synthase_B_chain"/>
</dbReference>
<dbReference type="NCBIfam" id="TIGR01144">
    <property type="entry name" value="ATP_synt_b"/>
    <property type="match status" value="1"/>
</dbReference>
<dbReference type="NCBIfam" id="NF004411">
    <property type="entry name" value="PRK05759.1-2"/>
    <property type="match status" value="1"/>
</dbReference>
<dbReference type="PANTHER" id="PTHR33445:SF1">
    <property type="entry name" value="ATP SYNTHASE SUBUNIT B"/>
    <property type="match status" value="1"/>
</dbReference>
<dbReference type="PANTHER" id="PTHR33445">
    <property type="entry name" value="ATP SYNTHASE SUBUNIT B', CHLOROPLASTIC"/>
    <property type="match status" value="1"/>
</dbReference>
<dbReference type="Pfam" id="PF00430">
    <property type="entry name" value="ATP-synt_B"/>
    <property type="match status" value="1"/>
</dbReference>
<dbReference type="SUPFAM" id="SSF81573">
    <property type="entry name" value="F1F0 ATP synthase subunit B, membrane domain"/>
    <property type="match status" value="1"/>
</dbReference>
<comment type="function">
    <text evidence="1">F(1)F(0) ATP synthase produces ATP from ADP in the presence of a proton or sodium gradient. F-type ATPases consist of two structural domains, F(1) containing the extramembraneous catalytic core and F(0) containing the membrane proton channel, linked together by a central stalk and a peripheral stalk. During catalysis, ATP synthesis in the catalytic domain of F(1) is coupled via a rotary mechanism of the central stalk subunits to proton translocation.</text>
</comment>
<comment type="function">
    <text evidence="1">Component of the F(0) channel, it forms part of the peripheral stalk, linking F(1) to F(0).</text>
</comment>
<comment type="subunit">
    <text evidence="1">F-type ATPases have 2 components, F(1) - the catalytic core - and F(0) - the membrane proton channel. F(1) has five subunits: alpha(3), beta(3), gamma(1), delta(1), epsilon(1). F(0) has three main subunits: a(1), b(2) and c(10-14). The alpha and beta chains form an alternating ring which encloses part of the gamma chain. F(1) is attached to F(0) by a central stalk formed by the gamma and epsilon chains, while a peripheral stalk is formed by the delta and b chains.</text>
</comment>
<comment type="subcellular location">
    <subcellularLocation>
        <location evidence="1">Cell inner membrane</location>
        <topology evidence="1">Single-pass membrane protein</topology>
    </subcellularLocation>
</comment>
<comment type="similarity">
    <text evidence="1">Belongs to the ATPase B chain family.</text>
</comment>
<reference key="1">
    <citation type="journal article" date="2010" name="PLoS ONE">
        <title>The complete genome sequence of Cupriavidus metallidurans strain CH34, a master survivalist in harsh and anthropogenic environments.</title>
        <authorList>
            <person name="Janssen P.J."/>
            <person name="Van Houdt R."/>
            <person name="Moors H."/>
            <person name="Monsieurs P."/>
            <person name="Morin N."/>
            <person name="Michaux A."/>
            <person name="Benotmane M.A."/>
            <person name="Leys N."/>
            <person name="Vallaeys T."/>
            <person name="Lapidus A."/>
            <person name="Monchy S."/>
            <person name="Medigue C."/>
            <person name="Taghavi S."/>
            <person name="McCorkle S."/>
            <person name="Dunn J."/>
            <person name="van der Lelie D."/>
            <person name="Mergeay M."/>
        </authorList>
    </citation>
    <scope>NUCLEOTIDE SEQUENCE [LARGE SCALE GENOMIC DNA]</scope>
    <source>
        <strain>ATCC 43123 / DSM 2839 / NBRC 102507 / CH34</strain>
    </source>
</reference>
<feature type="chain" id="PRO_0000368703" description="ATP synthase subunit b">
    <location>
        <begin position="1"/>
        <end position="156"/>
    </location>
</feature>
<feature type="transmembrane region" description="Helical" evidence="1">
    <location>
        <begin position="7"/>
        <end position="27"/>
    </location>
</feature>
<protein>
    <recommendedName>
        <fullName evidence="1">ATP synthase subunit b</fullName>
    </recommendedName>
    <alternativeName>
        <fullName evidence="1">ATP synthase F(0) sector subunit b</fullName>
    </alternativeName>
    <alternativeName>
        <fullName evidence="1">ATPase subunit I</fullName>
    </alternativeName>
    <alternativeName>
        <fullName evidence="1">F-type ATPase subunit b</fullName>
        <shortName evidence="1">F-ATPase subunit b</shortName>
    </alternativeName>
</protein>
<proteinExistence type="inferred from homology"/>
<name>ATPF_CUPMC</name>
<organism>
    <name type="scientific">Cupriavidus metallidurans (strain ATCC 43123 / DSM 2839 / NBRC 102507 / CH34)</name>
    <name type="common">Ralstonia metallidurans</name>
    <dbReference type="NCBI Taxonomy" id="266264"/>
    <lineage>
        <taxon>Bacteria</taxon>
        <taxon>Pseudomonadati</taxon>
        <taxon>Pseudomonadota</taxon>
        <taxon>Betaproteobacteria</taxon>
        <taxon>Burkholderiales</taxon>
        <taxon>Burkholderiaceae</taxon>
        <taxon>Cupriavidus</taxon>
    </lineage>
</organism>